<reference key="1">
    <citation type="journal article" date="2005" name="Nat. Cell Biol.">
        <title>Myosin-XVa is required for tip localization of whirlin and differential elongation of hair-cell stereocilia.</title>
        <authorList>
            <person name="Belyantseva I.A."/>
            <person name="Boger E.T."/>
            <person name="Naz S."/>
            <person name="Frolenkov G.I."/>
            <person name="Sellers J.R."/>
            <person name="Ahmed Z.M."/>
            <person name="Griffith A.J."/>
            <person name="Friedman T.B."/>
        </authorList>
    </citation>
    <scope>NUCLEOTIDE SEQUENCE [MRNA] (ISOFORMS 1; 2; 3; 4; 5; 6; 7; 8 AND 9)</scope>
    <scope>INTERACTION WITH MYO15A</scope>
    <scope>SUBCELLULAR LOCATION</scope>
    <source>
        <strain>C57BL/6J</strain>
        <tissue>Inner ear</tissue>
    </source>
</reference>
<reference key="2">
    <citation type="journal article" date="2012" name="Invest. Ophthalmol. Vis. Sci.">
        <title>RpgrORF15 connects to the usher protein network through direct interactions with multiple whirlin isoforms.</title>
        <authorList>
            <person name="Wright R.N."/>
            <person name="Hong D.H."/>
            <person name="Perkins B."/>
        </authorList>
    </citation>
    <scope>NUCLEOTIDE SEQUENCE [MRNA] (ISOFORMS 11 AND 12)</scope>
    <scope>INTERACTION WITH RPGR</scope>
    <scope>TISSUE SPECIFICITY</scope>
    <source>
        <strain>C57BL/6J</strain>
        <tissue>Retina</tissue>
    </source>
</reference>
<reference key="3">
    <citation type="journal article" date="2005" name="Science">
        <title>The transcriptional landscape of the mammalian genome.</title>
        <authorList>
            <person name="Carninci P."/>
            <person name="Kasukawa T."/>
            <person name="Katayama S."/>
            <person name="Gough J."/>
            <person name="Frith M.C."/>
            <person name="Maeda N."/>
            <person name="Oyama R."/>
            <person name="Ravasi T."/>
            <person name="Lenhard B."/>
            <person name="Wells C."/>
            <person name="Kodzius R."/>
            <person name="Shimokawa K."/>
            <person name="Bajic V.B."/>
            <person name="Brenner S.E."/>
            <person name="Batalov S."/>
            <person name="Forrest A.R."/>
            <person name="Zavolan M."/>
            <person name="Davis M.J."/>
            <person name="Wilming L.G."/>
            <person name="Aidinis V."/>
            <person name="Allen J.E."/>
            <person name="Ambesi-Impiombato A."/>
            <person name="Apweiler R."/>
            <person name="Aturaliya R.N."/>
            <person name="Bailey T.L."/>
            <person name="Bansal M."/>
            <person name="Baxter L."/>
            <person name="Beisel K.W."/>
            <person name="Bersano T."/>
            <person name="Bono H."/>
            <person name="Chalk A.M."/>
            <person name="Chiu K.P."/>
            <person name="Choudhary V."/>
            <person name="Christoffels A."/>
            <person name="Clutterbuck D.R."/>
            <person name="Crowe M.L."/>
            <person name="Dalla E."/>
            <person name="Dalrymple B.P."/>
            <person name="de Bono B."/>
            <person name="Della Gatta G."/>
            <person name="di Bernardo D."/>
            <person name="Down T."/>
            <person name="Engstrom P."/>
            <person name="Fagiolini M."/>
            <person name="Faulkner G."/>
            <person name="Fletcher C.F."/>
            <person name="Fukushima T."/>
            <person name="Furuno M."/>
            <person name="Futaki S."/>
            <person name="Gariboldi M."/>
            <person name="Georgii-Hemming P."/>
            <person name="Gingeras T.R."/>
            <person name="Gojobori T."/>
            <person name="Green R.E."/>
            <person name="Gustincich S."/>
            <person name="Harbers M."/>
            <person name="Hayashi Y."/>
            <person name="Hensch T.K."/>
            <person name="Hirokawa N."/>
            <person name="Hill D."/>
            <person name="Huminiecki L."/>
            <person name="Iacono M."/>
            <person name="Ikeo K."/>
            <person name="Iwama A."/>
            <person name="Ishikawa T."/>
            <person name="Jakt M."/>
            <person name="Kanapin A."/>
            <person name="Katoh M."/>
            <person name="Kawasawa Y."/>
            <person name="Kelso J."/>
            <person name="Kitamura H."/>
            <person name="Kitano H."/>
            <person name="Kollias G."/>
            <person name="Krishnan S.P."/>
            <person name="Kruger A."/>
            <person name="Kummerfeld S.K."/>
            <person name="Kurochkin I.V."/>
            <person name="Lareau L.F."/>
            <person name="Lazarevic D."/>
            <person name="Lipovich L."/>
            <person name="Liu J."/>
            <person name="Liuni S."/>
            <person name="McWilliam S."/>
            <person name="Madan Babu M."/>
            <person name="Madera M."/>
            <person name="Marchionni L."/>
            <person name="Matsuda H."/>
            <person name="Matsuzawa S."/>
            <person name="Miki H."/>
            <person name="Mignone F."/>
            <person name="Miyake S."/>
            <person name="Morris K."/>
            <person name="Mottagui-Tabar S."/>
            <person name="Mulder N."/>
            <person name="Nakano N."/>
            <person name="Nakauchi H."/>
            <person name="Ng P."/>
            <person name="Nilsson R."/>
            <person name="Nishiguchi S."/>
            <person name="Nishikawa S."/>
            <person name="Nori F."/>
            <person name="Ohara O."/>
            <person name="Okazaki Y."/>
            <person name="Orlando V."/>
            <person name="Pang K.C."/>
            <person name="Pavan W.J."/>
            <person name="Pavesi G."/>
            <person name="Pesole G."/>
            <person name="Petrovsky N."/>
            <person name="Piazza S."/>
            <person name="Reed J."/>
            <person name="Reid J.F."/>
            <person name="Ring B.Z."/>
            <person name="Ringwald M."/>
            <person name="Rost B."/>
            <person name="Ruan Y."/>
            <person name="Salzberg S.L."/>
            <person name="Sandelin A."/>
            <person name="Schneider C."/>
            <person name="Schoenbach C."/>
            <person name="Sekiguchi K."/>
            <person name="Semple C.A."/>
            <person name="Seno S."/>
            <person name="Sessa L."/>
            <person name="Sheng Y."/>
            <person name="Shibata Y."/>
            <person name="Shimada H."/>
            <person name="Shimada K."/>
            <person name="Silva D."/>
            <person name="Sinclair B."/>
            <person name="Sperling S."/>
            <person name="Stupka E."/>
            <person name="Sugiura K."/>
            <person name="Sultana R."/>
            <person name="Takenaka Y."/>
            <person name="Taki K."/>
            <person name="Tammoja K."/>
            <person name="Tan S.L."/>
            <person name="Tang S."/>
            <person name="Taylor M.S."/>
            <person name="Tegner J."/>
            <person name="Teichmann S.A."/>
            <person name="Ueda H.R."/>
            <person name="van Nimwegen E."/>
            <person name="Verardo R."/>
            <person name="Wei C.L."/>
            <person name="Yagi K."/>
            <person name="Yamanishi H."/>
            <person name="Zabarovsky E."/>
            <person name="Zhu S."/>
            <person name="Zimmer A."/>
            <person name="Hide W."/>
            <person name="Bult C."/>
            <person name="Grimmond S.M."/>
            <person name="Teasdale R.D."/>
            <person name="Liu E.T."/>
            <person name="Brusic V."/>
            <person name="Quackenbush J."/>
            <person name="Wahlestedt C."/>
            <person name="Mattick J.S."/>
            <person name="Hume D.A."/>
            <person name="Kai C."/>
            <person name="Sasaki D."/>
            <person name="Tomaru Y."/>
            <person name="Fukuda S."/>
            <person name="Kanamori-Katayama M."/>
            <person name="Suzuki M."/>
            <person name="Aoki J."/>
            <person name="Arakawa T."/>
            <person name="Iida J."/>
            <person name="Imamura K."/>
            <person name="Itoh M."/>
            <person name="Kato T."/>
            <person name="Kawaji H."/>
            <person name="Kawagashira N."/>
            <person name="Kawashima T."/>
            <person name="Kojima M."/>
            <person name="Kondo S."/>
            <person name="Konno H."/>
            <person name="Nakano K."/>
            <person name="Ninomiya N."/>
            <person name="Nishio T."/>
            <person name="Okada M."/>
            <person name="Plessy C."/>
            <person name="Shibata K."/>
            <person name="Shiraki T."/>
            <person name="Suzuki S."/>
            <person name="Tagami M."/>
            <person name="Waki K."/>
            <person name="Watahiki A."/>
            <person name="Okamura-Oho Y."/>
            <person name="Suzuki H."/>
            <person name="Kawai J."/>
            <person name="Hayashizaki Y."/>
        </authorList>
    </citation>
    <scope>NUCLEOTIDE SEQUENCE [LARGE SCALE MRNA] (ISOFORM 10)</scope>
    <source>
        <strain>C57BL/6J</strain>
        <tissue>Inner ear</tissue>
    </source>
</reference>
<reference key="4">
    <citation type="journal article" date="2009" name="PLoS Biol.">
        <title>Lineage-specific biology revealed by a finished genome assembly of the mouse.</title>
        <authorList>
            <person name="Church D.M."/>
            <person name="Goodstadt L."/>
            <person name="Hillier L.W."/>
            <person name="Zody M.C."/>
            <person name="Goldstein S."/>
            <person name="She X."/>
            <person name="Bult C.J."/>
            <person name="Agarwala R."/>
            <person name="Cherry J.L."/>
            <person name="DiCuccio M."/>
            <person name="Hlavina W."/>
            <person name="Kapustin Y."/>
            <person name="Meric P."/>
            <person name="Maglott D."/>
            <person name="Birtle Z."/>
            <person name="Marques A.C."/>
            <person name="Graves T."/>
            <person name="Zhou S."/>
            <person name="Teague B."/>
            <person name="Potamousis K."/>
            <person name="Churas C."/>
            <person name="Place M."/>
            <person name="Herschleb J."/>
            <person name="Runnheim R."/>
            <person name="Forrest D."/>
            <person name="Amos-Landgraf J."/>
            <person name="Schwartz D.C."/>
            <person name="Cheng Z."/>
            <person name="Lindblad-Toh K."/>
            <person name="Eichler E.E."/>
            <person name="Ponting C.P."/>
        </authorList>
    </citation>
    <scope>NUCLEOTIDE SEQUENCE [LARGE SCALE GENOMIC DNA]</scope>
    <source>
        <strain>C57BL/6J</strain>
    </source>
</reference>
<reference key="5">
    <citation type="journal article" date="2003" name="DNA Res.">
        <title>Prediction of the coding sequences of mouse homologues of KIAA gene: II. The complete nucleotide sequences of 400 mouse KIAA-homologous cDNAs identified by screening of terminal sequences of cDNA clones randomly sampled from size-fractionated libraries.</title>
        <authorList>
            <person name="Okazaki N."/>
            <person name="Kikuno R."/>
            <person name="Ohara R."/>
            <person name="Inamoto S."/>
            <person name="Aizawa H."/>
            <person name="Yuasa S."/>
            <person name="Nakajima D."/>
            <person name="Nagase T."/>
            <person name="Ohara O."/>
            <person name="Koga H."/>
        </authorList>
    </citation>
    <scope>NUCLEOTIDE SEQUENCE [LARGE SCALE MRNA] OF 38-918 (ISOFORM 4)</scope>
    <source>
        <tissue>Brain</tissue>
    </source>
</reference>
<reference key="6">
    <citation type="journal article" date="2002" name="J. Comp. Neurol.">
        <title>Elongation of hair cell stereocilia is defective in the mouse mutant whirler.</title>
        <authorList>
            <person name="Holme R.H."/>
            <person name="Kiernan B.W."/>
            <person name="Brown S.D.M."/>
            <person name="Steel K.P."/>
        </authorList>
    </citation>
    <scope>DISEASE</scope>
</reference>
<reference key="7">
    <citation type="journal article" date="2003" name="Nat. Genet.">
        <title>Defects in whirlin, a PDZ domain molecule involved in stereocilia elongation, cause deafness in the whirler mouse and families with DFNB31.</title>
        <authorList>
            <person name="Mburu P."/>
            <person name="Mustapha M."/>
            <person name="Varela A."/>
            <person name="Weil D."/>
            <person name="El-Amraoui A."/>
            <person name="Holme R.H."/>
            <person name="Rump A."/>
            <person name="Hardisty R.E."/>
            <person name="Blanchard S."/>
            <person name="Coimbra R.S."/>
            <person name="Perfettini I."/>
            <person name="Parkinson N."/>
            <person name="Mallon A.-M."/>
            <person name="Glenister P."/>
            <person name="Rogers M.J."/>
            <person name="Paige A.J."/>
            <person name="Moir L."/>
            <person name="Clay J."/>
            <person name="Rosenthal A."/>
            <person name="Liu X.Z."/>
            <person name="Blanco G."/>
            <person name="Steel K.P."/>
            <person name="Petit C."/>
            <person name="Brown S.D."/>
        </authorList>
    </citation>
    <scope>DISEASE</scope>
    <scope>ALTERNATIVE SPLICING</scope>
    <scope>TISSUE SPECIFICITY</scope>
</reference>
<reference key="8">
    <citation type="journal article" date="2005" name="Hum. Mol. Genet.">
        <title>Mutant analysis reveals whirlin as a dynamic organizer in the growing hair cell stereocilium.</title>
        <authorList>
            <person name="Kikkawa Y."/>
            <person name="Mburu P."/>
            <person name="Morse S."/>
            <person name="Kominami R."/>
            <person name="Townsend S."/>
            <person name="Brown S.D.M."/>
        </authorList>
    </citation>
    <scope>FUNCTION</scope>
    <scope>SUBCELLULAR LOCATION</scope>
    <scope>TISSUE SPECIFICITY</scope>
    <scope>DEVELOPMENTAL STAGE</scope>
</reference>
<reference key="9">
    <citation type="journal article" date="2005" name="Hum. Mol. Genet.">
        <title>Myosin XVa and whirlin, two deafness gene products required for hair bundle growth, are located at the stereocilia tips and interact directly.</title>
        <authorList>
            <person name="Delprat B."/>
            <person name="Michel V."/>
            <person name="Goodyear R."/>
            <person name="Yamasaki Y."/>
            <person name="Michalski N."/>
            <person name="El-Amraoui A."/>
            <person name="Perfettini I."/>
            <person name="Legrain P."/>
            <person name="Richardson G."/>
            <person name="Hardelin J.-P."/>
            <person name="Petit C."/>
        </authorList>
    </citation>
    <scope>SUBUNIT</scope>
    <scope>INTERACTION WITH LRRC4C; MYO7A AND MYO15A</scope>
    <scope>SUBCELLULAR LOCATION</scope>
</reference>
<reference key="10">
    <citation type="journal article" date="2005" name="Hum. Mol. Genet.">
        <title>Usherin, the defective protein in Usher syndrome type IIA, is likely to be a component of interstereocilia ankle links in the inner ear sensory cells.</title>
        <authorList>
            <person name="Adato A."/>
            <person name="Lefevre G."/>
            <person name="Delprat B."/>
            <person name="Michel V."/>
            <person name="Michalski N."/>
            <person name="Chardenoux S."/>
            <person name="Weil D."/>
            <person name="El-Amraoui A."/>
            <person name="Petit C."/>
        </authorList>
    </citation>
    <scope>INTERACTION WITH USH2A</scope>
</reference>
<reference key="11">
    <citation type="journal article" date="2006" name="Hum. Mol. Genet.">
        <title>The DFNB31 gene product whirlin connects to the Usher protein network in the cochlea and retina by direct association with USH2A and VLGR1.</title>
        <authorList>
            <person name="van Wijk E."/>
            <person name="van der Zwaag B."/>
            <person name="Peters T."/>
            <person name="Zimmermann U."/>
            <person name="Te Brinke H."/>
            <person name="Kersten F.F.J."/>
            <person name="Maerker T."/>
            <person name="Aller E."/>
            <person name="Hoefsloot L.H."/>
            <person name="Cremers C.W.R.J."/>
            <person name="Cremers F.P.M."/>
            <person name="Wolfrum U."/>
            <person name="Knipper M."/>
            <person name="Roepman R."/>
            <person name="Kremer H."/>
        </authorList>
    </citation>
    <scope>DEVELOPMENTAL STAGE</scope>
</reference>
<reference key="12">
    <citation type="journal article" date="2006" name="Proc. Natl. Acad. Sci. U.S.A.">
        <title>Whirlin complexes with p55 at the stereocilia tip during hair cell development.</title>
        <authorList>
            <person name="Mburu P."/>
            <person name="Kikkawa Y."/>
            <person name="Townsend S."/>
            <person name="Romero R."/>
            <person name="Yonekawa H."/>
            <person name="Brown S.D."/>
        </authorList>
    </citation>
    <scope>INTERACTION WITH MPP1</scope>
</reference>
<reference key="13">
    <citation type="journal article" date="2007" name="Cell Motil. Cytoskeleton">
        <title>The deaf mouse mutant whirler suggests a role for whirlin in actin filament dynamics and stereocilia development.</title>
        <authorList>
            <person name="Mogensen M.M."/>
            <person name="Rzadzinska A."/>
            <person name="Steel K.P."/>
        </authorList>
    </citation>
    <scope>DISEASE</scope>
</reference>
<reference key="14">
    <citation type="journal article" date="2007" name="Hum. Mol. Genet.">
        <title>MPP1 links the Usher protein network and the Crumbs protein complex in the retina.</title>
        <authorList>
            <person name="Gosens I."/>
            <person name="van Wijk E."/>
            <person name="Kersten F.F."/>
            <person name="Krieger E."/>
            <person name="van der Zwaag B."/>
            <person name="Maerker T."/>
            <person name="Letteboer S.J."/>
            <person name="Dusseljee S."/>
            <person name="Peters T."/>
            <person name="Spierenburg H.A."/>
            <person name="Punte I.M."/>
            <person name="Wolfrum U."/>
            <person name="Cremers F.P.M."/>
            <person name="Kremer H."/>
            <person name="Roepman R."/>
        </authorList>
    </citation>
    <scope>INTERACTION WITH MPP1</scope>
    <scope>SUBCELLULAR LOCATION</scope>
</reference>
<reference key="15">
    <citation type="journal article" date="2007" name="J. Neurosci.">
        <title>Molecular characterization of the ankle-link complex in cochlear hair cells and its role in the hair bundle functioning.</title>
        <authorList>
            <person name="Michalski N."/>
            <person name="Michel V."/>
            <person name="Bahloul A."/>
            <person name="Lefevre G."/>
            <person name="Barral J."/>
            <person name="Yagi H."/>
            <person name="Chardenoux S."/>
            <person name="Weil D."/>
            <person name="Martin P."/>
            <person name="Hardelin J.P."/>
            <person name="Sato M."/>
            <person name="Petit C."/>
        </authorList>
    </citation>
    <scope>TISSUE SPECIFICITY</scope>
    <scope>DEVELOPMENTAL STAGE</scope>
    <scope>SUBCELLULAR LOCATION</scope>
</reference>
<reference key="16">
    <citation type="journal article" date="2010" name="PLoS Genet.">
        <title>Ablation of whirlin long isoform disrupts the USH2 protein complex and causes vision and hearing loss.</title>
        <authorList>
            <person name="Yang J."/>
            <person name="Liu X."/>
            <person name="Zhao Y."/>
            <person name="Adamian M."/>
            <person name="Pawlyk B."/>
            <person name="Sun X."/>
            <person name="McMillan D.R."/>
            <person name="Liberman M.C."/>
            <person name="Li T."/>
        </authorList>
    </citation>
    <scope>FUNCTION</scope>
    <scope>DISRUPTION PHENOTYPE (ISOFORM 1)</scope>
    <scope>SUBCELLULAR LOCATION</scope>
    <scope>TISSUE SPECIFICITY</scope>
    <scope>IDENTIFICATION IN THE USH2 COMPLEX</scope>
</reference>
<reference key="17">
    <citation type="journal article" date="2011" name="Curr. Biol.">
        <title>Regulation of stereocilia length by myosin XVa and whirlin depends on the actin-regulatory protein Eps8.</title>
        <authorList>
            <person name="Manor U."/>
            <person name="Disanza A."/>
            <person name="Grati M."/>
            <person name="Andrade L."/>
            <person name="Lin H."/>
            <person name="Di Fiore P.P."/>
            <person name="Scita G."/>
            <person name="Kachar B."/>
        </authorList>
    </citation>
    <scope>INTERACTION WITH EPS8</scope>
</reference>
<reference key="18">
    <citation type="journal article" date="2012" name="J. Neurosci.">
        <title>Localization of PDZD7 to the stereocilia ankle-link associates this scaffolding protein with the Usher syndrome protein network.</title>
        <authorList>
            <person name="Grati M."/>
            <person name="Shin J.B."/>
            <person name="Weston M.D."/>
            <person name="Green J."/>
            <person name="Bhat M.A."/>
            <person name="Gillespie P.G."/>
            <person name="Kachar B."/>
        </authorList>
    </citation>
    <scope>INTERACTION WITH USH2 AND ADGRV1</scope>
</reference>
<reference key="19">
    <citation type="journal article" date="2014" name="Hum. Mol. Genet.">
        <title>Deletion of PDZD7 disrupts the Usher syndrome type 2 protein complex in cochlear hair cells and causes hearing loss in mice.</title>
        <authorList>
            <person name="Zou J."/>
            <person name="Zheng T."/>
            <person name="Ren C."/>
            <person name="Askew C."/>
            <person name="Liu X.P."/>
            <person name="Pan B."/>
            <person name="Holt J.R."/>
            <person name="Wang Y."/>
            <person name="Yang J."/>
        </authorList>
    </citation>
    <scope>SUBCELLULAR LOCATION</scope>
    <source>
        <strain>C57BL/6J</strain>
        <tissue>Retina</tissue>
    </source>
</reference>
<reference key="20">
    <citation type="journal article" date="2014" name="J. Biol. Chem.">
        <title>Whirlin and PDZ domain-containing 7 (PDZD7) proteins are both required to form the quaternary protein complex associated with Usher syndrome type 2.</title>
        <authorList>
            <person name="Chen Q."/>
            <person name="Zou J."/>
            <person name="Shen Z."/>
            <person name="Zhang W."/>
            <person name="Yang J."/>
        </authorList>
    </citation>
    <scope>IDENTIFICATION IN THE USH2 COMPLEX</scope>
    <scope>SUBUNIT</scope>
</reference>
<reference evidence="28 29" key="21">
    <citation type="journal article" date="2018" name="FEBS J.">
        <title>Structural plasticity of the HHD2 domain of whirlin.</title>
        <authorList>
            <person name="Delhommel F."/>
            <person name="Cordier F."/>
            <person name="Saul F."/>
            <person name="Chataigner L."/>
            <person name="Haouz A."/>
            <person name="Wolff N."/>
        </authorList>
    </citation>
    <scope>X-RAY CRYSTALLOGRAPHY (1.75 ANGSTROMS) OF 420-499</scope>
</reference>
<proteinExistence type="evidence at protein level"/>
<sequence length="918" mass="98012">MNAQLDGLSVSSSSTGSLGSAAAAAGGGGGAGLRLLSANVRQLHQALTALLSEPEREQFTHCLNAYHARRNVFDLVRTLRVLLDSPVKRRLLPMLRLVIPRSDQLLFDQYTAEGLYLPATTPYRQPAWAAPDGAGPGEVRLVSLRRAKAHEGLGFSIRGGSEHGVGIYVSLVEPGSLAEKEGLRVGDQILRVNDKSLARVTHAEAVKALKGSKKLVLSVYSAGRIPGGYVTNHIYTWVDPQGRSTSPPSSLPQPHGSTLRQREDDRRSTLHLLQSGDEKKVNLVLGDGRSLGLTIRGGAEYGLGIYITGVDPGSEAESSGLKVGDQILEVNGRSFLNILHDEAVKLLKSSRHLILTVKDVGRLPHARTTVDQTKWIASSRIGESVANSAGFPGDHTEEGTSKPGFYKGPAGSQVTLSSLGNQTRALLDDQARHLLTEQERATMMYYLAQYRGGTISVEAMVMALFELLNTHAKFSLLSEVRSIISPQDLDRFDHLVLRREIESMKARQPPGPGVGDTYSMVSYSDTGSSTGSHGTSTTVSSARERLLWLIDLMENTLDLEGTGETTQGSTNALPDVSVDDVKSPSEDLPGIKPPPPPPPLAQGHDRLLGQPRKPGREDPAPLSSAAHSGIVFSAPRNRSPPPGTAPTPGPSSAQDSPSSPIYASISHANPSSRKPLDTHLALVNQHPIGPFPRVQSPPHLKSPPAETPGAGACLPPPSPSEHPDAVGANQHFVLVEVHRPDSEPDVNEVRALPQTRTASTLSQLSDSGQTLSEDSGVDAGETEASTSGRGRQTASAKNKNGKEQPRTERTAEGANKPPGLLEPTSTLVRVRKSAATLGIAIEGGANTRQPLPRIVTIQRGGSAHNCGQLKVGHVILEVNGQTLRGKEHKEAARIIAEAFKTKERDYIDFLVTEFNVML</sequence>
<protein>
    <recommendedName>
        <fullName>Whirlin</fullName>
    </recommendedName>
</protein>
<dbReference type="EMBL" id="AY739114">
    <property type="protein sequence ID" value="AAV87519.1"/>
    <property type="molecule type" value="mRNA"/>
</dbReference>
<dbReference type="EMBL" id="AY739115">
    <property type="protein sequence ID" value="AAV87520.1"/>
    <property type="molecule type" value="mRNA"/>
</dbReference>
<dbReference type="EMBL" id="AY739116">
    <property type="protein sequence ID" value="AAV87521.1"/>
    <property type="molecule type" value="mRNA"/>
</dbReference>
<dbReference type="EMBL" id="AY739117">
    <property type="protein sequence ID" value="AAV87522.1"/>
    <property type="molecule type" value="mRNA"/>
</dbReference>
<dbReference type="EMBL" id="AY739118">
    <property type="protein sequence ID" value="AAV87523.1"/>
    <property type="molecule type" value="mRNA"/>
</dbReference>
<dbReference type="EMBL" id="AY739119">
    <property type="protein sequence ID" value="AAV87524.1"/>
    <property type="molecule type" value="mRNA"/>
</dbReference>
<dbReference type="EMBL" id="AY739120">
    <property type="protein sequence ID" value="AAV87525.1"/>
    <property type="molecule type" value="mRNA"/>
</dbReference>
<dbReference type="EMBL" id="AY739121">
    <property type="protein sequence ID" value="AAV87526.1"/>
    <property type="molecule type" value="mRNA"/>
</dbReference>
<dbReference type="EMBL" id="AY739122">
    <property type="protein sequence ID" value="AAV87527.1"/>
    <property type="molecule type" value="mRNA"/>
</dbReference>
<dbReference type="EMBL" id="HQ148552">
    <property type="protein sequence ID" value="AEL23234.1"/>
    <property type="molecule type" value="mRNA"/>
</dbReference>
<dbReference type="EMBL" id="HQ148553">
    <property type="protein sequence ID" value="AEL23235.1"/>
    <property type="molecule type" value="mRNA"/>
</dbReference>
<dbReference type="EMBL" id="AK157955">
    <property type="protein sequence ID" value="BAE34281.1"/>
    <property type="molecule type" value="mRNA"/>
</dbReference>
<dbReference type="EMBL" id="AL683828">
    <property type="status" value="NOT_ANNOTATED_CDS"/>
    <property type="molecule type" value="Genomic_DNA"/>
</dbReference>
<dbReference type="EMBL" id="AK122523">
    <property type="protein sequence ID" value="BAC65805.1"/>
    <property type="molecule type" value="mRNA"/>
</dbReference>
<dbReference type="CCDS" id="CCDS18255.1">
    <molecule id="Q80VW5-1"/>
</dbReference>
<dbReference type="CCDS" id="CCDS18256.1">
    <molecule id="Q80VW5-4"/>
</dbReference>
<dbReference type="CCDS" id="CCDS18257.1">
    <molecule id="Q80VW5-3"/>
</dbReference>
<dbReference type="CCDS" id="CCDS38778.1">
    <molecule id="Q80VW5-2"/>
</dbReference>
<dbReference type="RefSeq" id="NP_001008791.1">
    <molecule id="Q80VW5-1"/>
    <property type="nucleotide sequence ID" value="NM_001008791.2"/>
</dbReference>
<dbReference type="RefSeq" id="NP_001008792.1">
    <molecule id="Q80VW5-2"/>
    <property type="nucleotide sequence ID" value="NM_001008792.2"/>
</dbReference>
<dbReference type="RefSeq" id="NP_001008793.1">
    <molecule id="Q80VW5-4"/>
    <property type="nucleotide sequence ID" value="NM_001008793.2"/>
</dbReference>
<dbReference type="RefSeq" id="NP_001263300.1">
    <molecule id="Q80VW5-12"/>
    <property type="nucleotide sequence ID" value="NM_001276371.1"/>
</dbReference>
<dbReference type="RefSeq" id="NP_082916.1">
    <molecule id="Q80VW5-3"/>
    <property type="nucleotide sequence ID" value="NM_028640.2"/>
</dbReference>
<dbReference type="RefSeq" id="XP_017175899.1">
    <property type="nucleotide sequence ID" value="XM_017320410.1"/>
</dbReference>
<dbReference type="PDB" id="6FDD">
    <property type="method" value="X-ray"/>
    <property type="resolution" value="1.75 A"/>
    <property type="chains" value="A/B/C/D/E/F=420-499"/>
</dbReference>
<dbReference type="PDB" id="6FDE">
    <property type="method" value="X-ray"/>
    <property type="resolution" value="1.85 A"/>
    <property type="chains" value="A=420-499"/>
</dbReference>
<dbReference type="PDB" id="6Y38">
    <property type="method" value="X-ray"/>
    <property type="resolution" value="1.70 A"/>
    <property type="chains" value="A/B=821-915"/>
</dbReference>
<dbReference type="PDB" id="6Y9N">
    <property type="method" value="X-ray"/>
    <property type="resolution" value="1.93 A"/>
    <property type="chains" value="A=821-918"/>
</dbReference>
<dbReference type="PDB" id="6Y9O">
    <property type="method" value="X-ray"/>
    <property type="resolution" value="1.63 A"/>
    <property type="chains" value="A=821-918"/>
</dbReference>
<dbReference type="PDB" id="6Y9P">
    <property type="method" value="X-ray"/>
    <property type="resolution" value="3.17 A"/>
    <property type="chains" value="A/B/E/G/I/K=821-918"/>
</dbReference>
<dbReference type="PDB" id="6Y9Q">
    <property type="method" value="X-ray"/>
    <property type="resolution" value="1.31 A"/>
    <property type="chains" value="B=821-918"/>
</dbReference>
<dbReference type="PDBsum" id="6FDD"/>
<dbReference type="PDBsum" id="6FDE"/>
<dbReference type="PDBsum" id="6Y38"/>
<dbReference type="PDBsum" id="6Y9N"/>
<dbReference type="PDBsum" id="6Y9O"/>
<dbReference type="PDBsum" id="6Y9P"/>
<dbReference type="PDBsum" id="6Y9Q"/>
<dbReference type="SMR" id="Q80VW5"/>
<dbReference type="ComplexPortal" id="CPX-2501">
    <property type="entry name" value="USH2 complex"/>
</dbReference>
<dbReference type="CORUM" id="Q80VW5"/>
<dbReference type="DIP" id="DIP-42047N"/>
<dbReference type="FunCoup" id="Q80VW5">
    <property type="interactions" value="147"/>
</dbReference>
<dbReference type="IntAct" id="Q80VW5">
    <property type="interactions" value="5"/>
</dbReference>
<dbReference type="MINT" id="Q80VW5"/>
<dbReference type="STRING" id="10090.ENSMUSP00000081557"/>
<dbReference type="GlyGen" id="Q80VW5">
    <property type="glycosylation" value="1 site"/>
</dbReference>
<dbReference type="iPTMnet" id="Q80VW5"/>
<dbReference type="PhosphoSitePlus" id="Q80VW5"/>
<dbReference type="PaxDb" id="10090-ENSMUSP00000081557"/>
<dbReference type="ProteomicsDB" id="299675">
    <molecule id="Q80VW5-1"/>
</dbReference>
<dbReference type="ProteomicsDB" id="299676">
    <molecule id="Q80VW5-2"/>
</dbReference>
<dbReference type="ProteomicsDB" id="299677">
    <molecule id="Q80VW5-3"/>
</dbReference>
<dbReference type="ProteomicsDB" id="299678">
    <molecule id="Q80VW5-4"/>
</dbReference>
<dbReference type="ProteomicsDB" id="299679">
    <molecule id="Q80VW5-5"/>
</dbReference>
<dbReference type="ProteomicsDB" id="299680">
    <molecule id="Q80VW5-6"/>
</dbReference>
<dbReference type="ProteomicsDB" id="299681">
    <molecule id="Q80VW5-7"/>
</dbReference>
<dbReference type="ProteomicsDB" id="299682">
    <molecule id="Q80VW5-8"/>
</dbReference>
<dbReference type="ProteomicsDB" id="299683">
    <molecule id="Q80VW5-9"/>
</dbReference>
<dbReference type="ProteomicsDB" id="299684">
    <molecule id="Q80VW5-10"/>
</dbReference>
<dbReference type="ProteomicsDB" id="299685">
    <molecule id="Q80VW5-11"/>
</dbReference>
<dbReference type="ProteomicsDB" id="299686">
    <molecule id="Q80VW5-12"/>
</dbReference>
<dbReference type="ABCD" id="Q80VW5">
    <property type="antibodies" value="13 sequenced antibodies"/>
</dbReference>
<dbReference type="Antibodypedia" id="29951">
    <property type="antibodies" value="151 antibodies from 23 providers"/>
</dbReference>
<dbReference type="DNASU" id="73750"/>
<dbReference type="Ensembl" id="ENSMUST00000063650.10">
    <molecule id="Q80VW5-3"/>
    <property type="protein sequence ID" value="ENSMUSP00000069664.4"/>
    <property type="gene ID" value="ENSMUSG00000039137.19"/>
</dbReference>
<dbReference type="Ensembl" id="ENSMUST00000063672.10">
    <molecule id="Q80VW5-10"/>
    <property type="protein sequence ID" value="ENSMUSP00000065838.4"/>
    <property type="gene ID" value="ENSMUSG00000039137.19"/>
</dbReference>
<dbReference type="Ensembl" id="ENSMUST00000084510.8">
    <molecule id="Q80VW5-1"/>
    <property type="protein sequence ID" value="ENSMUSP00000081557.2"/>
    <property type="gene ID" value="ENSMUSG00000039137.19"/>
</dbReference>
<dbReference type="Ensembl" id="ENSMUST00000095037.2">
    <molecule id="Q80VW5-8"/>
    <property type="protein sequence ID" value="ENSMUSP00000092647.2"/>
    <property type="gene ID" value="ENSMUSG00000039137.19"/>
</dbReference>
<dbReference type="Ensembl" id="ENSMUST00000095038.8">
    <molecule id="Q80VW5-6"/>
    <property type="protein sequence ID" value="ENSMUSP00000092648.2"/>
    <property type="gene ID" value="ENSMUSG00000039137.19"/>
</dbReference>
<dbReference type="Ensembl" id="ENSMUST00000102867.8">
    <molecule id="Q80VW5-4"/>
    <property type="protein sequence ID" value="ENSMUSP00000099931.2"/>
    <property type="gene ID" value="ENSMUSG00000039137.19"/>
</dbReference>
<dbReference type="Ensembl" id="ENSMUST00000107393.8">
    <molecule id="Q80VW5-2"/>
    <property type="protein sequence ID" value="ENSMUSP00000103016.2"/>
    <property type="gene ID" value="ENSMUSG00000039137.19"/>
</dbReference>
<dbReference type="Ensembl" id="ENSMUST00000119294.8">
    <molecule id="Q80VW5-7"/>
    <property type="protein sequence ID" value="ENSMUSP00000114030.2"/>
    <property type="gene ID" value="ENSMUSG00000039137.19"/>
</dbReference>
<dbReference type="GeneID" id="73750"/>
<dbReference type="KEGG" id="mmu:73750"/>
<dbReference type="UCSC" id="uc008tgf.1">
    <molecule id="Q80VW5-9"/>
    <property type="organism name" value="mouse"/>
</dbReference>
<dbReference type="UCSC" id="uc008tgg.1">
    <molecule id="Q80VW5-5"/>
    <property type="organism name" value="mouse"/>
</dbReference>
<dbReference type="UCSC" id="uc008tgh.2">
    <molecule id="Q80VW5-1"/>
    <property type="organism name" value="mouse"/>
</dbReference>
<dbReference type="UCSC" id="uc008tgi.2">
    <molecule id="Q80VW5-4"/>
    <property type="organism name" value="mouse"/>
</dbReference>
<dbReference type="UCSC" id="uc008tgj.2">
    <molecule id="Q80VW5-2"/>
    <property type="organism name" value="mouse"/>
</dbReference>
<dbReference type="UCSC" id="uc008tgk.2">
    <molecule id="Q80VW5-3"/>
    <property type="organism name" value="mouse"/>
</dbReference>
<dbReference type="UCSC" id="uc008tgm.1">
    <molecule id="Q80VW5-8"/>
    <property type="organism name" value="mouse"/>
</dbReference>
<dbReference type="UCSC" id="uc008tgn.1">
    <molecule id="Q80VW5-7"/>
    <property type="organism name" value="mouse"/>
</dbReference>
<dbReference type="UCSC" id="uc008tgp.2">
    <molecule id="Q80VW5-10"/>
    <property type="organism name" value="mouse"/>
</dbReference>
<dbReference type="UCSC" id="uc033icr.1">
    <molecule id="Q80VW5-12"/>
    <property type="organism name" value="mouse"/>
</dbReference>
<dbReference type="AGR" id="MGI:2682003"/>
<dbReference type="CTD" id="25861"/>
<dbReference type="MGI" id="MGI:2682003">
    <property type="gene designation" value="Whrn"/>
</dbReference>
<dbReference type="VEuPathDB" id="HostDB:ENSMUSG00000039137"/>
<dbReference type="eggNOG" id="KOG3528">
    <property type="taxonomic scope" value="Eukaryota"/>
</dbReference>
<dbReference type="GeneTree" id="ENSGT00950000183002"/>
<dbReference type="HOGENOM" id="CLU_014984_0_0_1"/>
<dbReference type="InParanoid" id="Q80VW5"/>
<dbReference type="OMA" id="TMVNQTR"/>
<dbReference type="OrthoDB" id="10029564at2759"/>
<dbReference type="PhylomeDB" id="Q80VW5"/>
<dbReference type="TreeFam" id="TF325033"/>
<dbReference type="BioGRID-ORCS" id="73750">
    <property type="hits" value="4 hits in 76 CRISPR screens"/>
</dbReference>
<dbReference type="ChiTaRS" id="Whrn">
    <property type="organism name" value="mouse"/>
</dbReference>
<dbReference type="PRO" id="PR:Q80VW5"/>
<dbReference type="Proteomes" id="UP000000589">
    <property type="component" value="Chromosome 4"/>
</dbReference>
<dbReference type="RNAct" id="Q80VW5">
    <property type="molecule type" value="protein"/>
</dbReference>
<dbReference type="Bgee" id="ENSMUSG00000039137">
    <property type="expression patterns" value="Expressed in retinal neural layer and 126 other cell types or tissues"/>
</dbReference>
<dbReference type="ExpressionAtlas" id="Q80VW5">
    <property type="expression patterns" value="baseline and differential"/>
</dbReference>
<dbReference type="GO" id="GO:0005884">
    <property type="term" value="C:actin filament"/>
    <property type="evidence" value="ECO:0000314"/>
    <property type="project" value="MGI"/>
</dbReference>
<dbReference type="GO" id="GO:0036064">
    <property type="term" value="C:ciliary basal body"/>
    <property type="evidence" value="ECO:0000314"/>
    <property type="project" value="MGI"/>
</dbReference>
<dbReference type="GO" id="GO:0005929">
    <property type="term" value="C:cilium"/>
    <property type="evidence" value="ECO:0000314"/>
    <property type="project" value="MGI"/>
</dbReference>
<dbReference type="GO" id="GO:0005829">
    <property type="term" value="C:cytosol"/>
    <property type="evidence" value="ECO:0000304"/>
    <property type="project" value="Reactome"/>
</dbReference>
<dbReference type="GO" id="GO:0030426">
    <property type="term" value="C:growth cone"/>
    <property type="evidence" value="ECO:0007669"/>
    <property type="project" value="UniProtKB-SubCell"/>
</dbReference>
<dbReference type="GO" id="GO:0043005">
    <property type="term" value="C:neuron projection"/>
    <property type="evidence" value="ECO:0000314"/>
    <property type="project" value="MGI"/>
</dbReference>
<dbReference type="GO" id="GO:1990075">
    <property type="term" value="C:periciliary membrane compartment"/>
    <property type="evidence" value="ECO:0000314"/>
    <property type="project" value="UniProtKB"/>
</dbReference>
<dbReference type="GO" id="GO:0032391">
    <property type="term" value="C:photoreceptor connecting cilium"/>
    <property type="evidence" value="ECO:0000314"/>
    <property type="project" value="MGI"/>
</dbReference>
<dbReference type="GO" id="GO:0001917">
    <property type="term" value="C:photoreceptor inner segment"/>
    <property type="evidence" value="ECO:0000314"/>
    <property type="project" value="MGI"/>
</dbReference>
<dbReference type="GO" id="GO:0002141">
    <property type="term" value="C:stereocilia ankle link"/>
    <property type="evidence" value="ECO:0000314"/>
    <property type="project" value="UniProtKB"/>
</dbReference>
<dbReference type="GO" id="GO:0002142">
    <property type="term" value="C:stereocilia ankle link complex"/>
    <property type="evidence" value="ECO:0000314"/>
    <property type="project" value="MGI"/>
</dbReference>
<dbReference type="GO" id="GO:0032420">
    <property type="term" value="C:stereocilium"/>
    <property type="evidence" value="ECO:0000314"/>
    <property type="project" value="UniProtKB"/>
</dbReference>
<dbReference type="GO" id="GO:0032421">
    <property type="term" value="C:stereocilium bundle"/>
    <property type="evidence" value="ECO:0000314"/>
    <property type="project" value="MGI"/>
</dbReference>
<dbReference type="GO" id="GO:0032426">
    <property type="term" value="C:stereocilium tip"/>
    <property type="evidence" value="ECO:0000314"/>
    <property type="project" value="MGI"/>
</dbReference>
<dbReference type="GO" id="GO:0045202">
    <property type="term" value="C:synapse"/>
    <property type="evidence" value="ECO:0007669"/>
    <property type="project" value="UniProtKB-SubCell"/>
</dbReference>
<dbReference type="GO" id="GO:1990696">
    <property type="term" value="C:USH2 complex"/>
    <property type="evidence" value="ECO:0000314"/>
    <property type="project" value="UniProtKB"/>
</dbReference>
<dbReference type="GO" id="GO:0042802">
    <property type="term" value="F:identical protein binding"/>
    <property type="evidence" value="ECO:0000353"/>
    <property type="project" value="MGI"/>
</dbReference>
<dbReference type="GO" id="GO:0060088">
    <property type="term" value="P:auditory receptor cell stereocilium organization"/>
    <property type="evidence" value="ECO:0000315"/>
    <property type="project" value="MGI"/>
</dbReference>
<dbReference type="GO" id="GO:0021694">
    <property type="term" value="P:cerebellar Purkinje cell layer formation"/>
    <property type="evidence" value="ECO:0000315"/>
    <property type="project" value="CACAO"/>
</dbReference>
<dbReference type="GO" id="GO:0050910">
    <property type="term" value="P:detection of mechanical stimulus involved in sensory perception of sound"/>
    <property type="evidence" value="ECO:0000314"/>
    <property type="project" value="UniProtKB"/>
</dbReference>
<dbReference type="GO" id="GO:0051649">
    <property type="term" value="P:establishment of localization in cell"/>
    <property type="evidence" value="ECO:0000315"/>
    <property type="project" value="MGI"/>
</dbReference>
<dbReference type="GO" id="GO:0045184">
    <property type="term" value="P:establishment of protein localization"/>
    <property type="evidence" value="ECO:0000315"/>
    <property type="project" value="MGI"/>
</dbReference>
<dbReference type="GO" id="GO:0060113">
    <property type="term" value="P:inner ear receptor cell differentiation"/>
    <property type="evidence" value="ECO:0000303"/>
    <property type="project" value="ComplexPortal"/>
</dbReference>
<dbReference type="GO" id="GO:0060122">
    <property type="term" value="P:inner ear receptor cell stereocilium organization"/>
    <property type="evidence" value="ECO:0000315"/>
    <property type="project" value="UniProtKB"/>
</dbReference>
<dbReference type="GO" id="GO:1990227">
    <property type="term" value="P:paranodal junction maintenance"/>
    <property type="evidence" value="ECO:0000315"/>
    <property type="project" value="CACAO"/>
</dbReference>
<dbReference type="GO" id="GO:0010628">
    <property type="term" value="P:positive regulation of gene expression"/>
    <property type="evidence" value="ECO:0000314"/>
    <property type="project" value="MGI"/>
</dbReference>
<dbReference type="GO" id="GO:0001895">
    <property type="term" value="P:retina homeostasis"/>
    <property type="evidence" value="ECO:0000314"/>
    <property type="project" value="UniProtKB"/>
</dbReference>
<dbReference type="GO" id="GO:0050953">
    <property type="term" value="P:sensory perception of light stimulus"/>
    <property type="evidence" value="ECO:0007669"/>
    <property type="project" value="Ensembl"/>
</dbReference>
<dbReference type="GO" id="GO:0007605">
    <property type="term" value="P:sensory perception of sound"/>
    <property type="evidence" value="ECO:0000315"/>
    <property type="project" value="MGI"/>
</dbReference>
<dbReference type="CDD" id="cd07356">
    <property type="entry name" value="HN_L-whirlin_R1_like"/>
    <property type="match status" value="1"/>
</dbReference>
<dbReference type="CDD" id="cd07357">
    <property type="entry name" value="HN_L-whirlin_R2_like"/>
    <property type="match status" value="1"/>
</dbReference>
<dbReference type="CDD" id="cd06740">
    <property type="entry name" value="PDZ1_FL-whirlin"/>
    <property type="match status" value="1"/>
</dbReference>
<dbReference type="CDD" id="cd06741">
    <property type="entry name" value="PDZ2_FL-whirlin"/>
    <property type="match status" value="1"/>
</dbReference>
<dbReference type="CDD" id="cd06742">
    <property type="entry name" value="PDZ3_FL-whirlin-like"/>
    <property type="match status" value="1"/>
</dbReference>
<dbReference type="DisProt" id="DP02426"/>
<dbReference type="FunFam" id="1.20.1160.20:FF:000002">
    <property type="entry name" value="Whirlin a"/>
    <property type="match status" value="1"/>
</dbReference>
<dbReference type="FunFam" id="1.20.1160.20:FF:000003">
    <property type="entry name" value="Whirlin a"/>
    <property type="match status" value="1"/>
</dbReference>
<dbReference type="FunFam" id="2.30.42.10:FF:000079">
    <property type="entry name" value="Whirlin a"/>
    <property type="match status" value="1"/>
</dbReference>
<dbReference type="FunFam" id="2.30.42.10:FF:000087">
    <property type="entry name" value="Whirlin a"/>
    <property type="match status" value="1"/>
</dbReference>
<dbReference type="FunFam" id="2.30.42.10:FF:000111">
    <property type="entry name" value="Whirlin a"/>
    <property type="match status" value="1"/>
</dbReference>
<dbReference type="Gene3D" id="1.20.1160.20">
    <property type="match status" value="2"/>
</dbReference>
<dbReference type="Gene3D" id="2.30.42.10">
    <property type="match status" value="3"/>
</dbReference>
<dbReference type="InterPro" id="IPR001478">
    <property type="entry name" value="PDZ"/>
</dbReference>
<dbReference type="InterPro" id="IPR036034">
    <property type="entry name" value="PDZ_sf"/>
</dbReference>
<dbReference type="InterPro" id="IPR051844">
    <property type="entry name" value="USH2_Complex_Protein"/>
</dbReference>
<dbReference type="InterPro" id="IPR047056">
    <property type="entry name" value="Whirlin_HN-like_dom1"/>
</dbReference>
<dbReference type="InterPro" id="IPR033028">
    <property type="entry name" value="Whirlin_HN-like_dom2"/>
</dbReference>
<dbReference type="PANTHER" id="PTHR23116">
    <property type="entry name" value="PDZ DOMAIN CONTAINING WHIRLIN AND HARMONIN-RELATED"/>
    <property type="match status" value="1"/>
</dbReference>
<dbReference type="PANTHER" id="PTHR23116:SF37">
    <property type="entry name" value="WHIRLIN"/>
    <property type="match status" value="1"/>
</dbReference>
<dbReference type="Pfam" id="PF00595">
    <property type="entry name" value="PDZ"/>
    <property type="match status" value="3"/>
</dbReference>
<dbReference type="SMART" id="SM00228">
    <property type="entry name" value="PDZ"/>
    <property type="match status" value="3"/>
</dbReference>
<dbReference type="SUPFAM" id="SSF50156">
    <property type="entry name" value="PDZ domain-like"/>
    <property type="match status" value="3"/>
</dbReference>
<dbReference type="PROSITE" id="PS50106">
    <property type="entry name" value="PDZ"/>
    <property type="match status" value="3"/>
</dbReference>
<feature type="chain" id="PRO_0000065969" description="Whirlin">
    <location>
        <begin position="1"/>
        <end position="918"/>
    </location>
</feature>
<feature type="domain" description="PDZ 1" evidence="3">
    <location>
        <begin position="141"/>
        <end position="224"/>
    </location>
</feature>
<feature type="domain" description="PDZ 2" evidence="3">
    <location>
        <begin position="280"/>
        <end position="362"/>
    </location>
</feature>
<feature type="domain" description="PDZ 3" evidence="3">
    <location>
        <begin position="827"/>
        <end position="910"/>
    </location>
</feature>
<feature type="region of interest" description="Disordered" evidence="4">
    <location>
        <begin position="240"/>
        <end position="266"/>
    </location>
</feature>
<feature type="region of interest" description="Disordered" evidence="4">
    <location>
        <begin position="387"/>
        <end position="407"/>
    </location>
</feature>
<feature type="region of interest" description="Disordered" evidence="4">
    <location>
        <begin position="503"/>
        <end position="538"/>
    </location>
</feature>
<feature type="region of interest" description="Disordered" evidence="4">
    <location>
        <begin position="560"/>
        <end position="824"/>
    </location>
</feature>
<feature type="compositionally biased region" description="Low complexity" evidence="4">
    <location>
        <begin position="522"/>
        <end position="538"/>
    </location>
</feature>
<feature type="compositionally biased region" description="Polar residues" evidence="4">
    <location>
        <begin position="563"/>
        <end position="572"/>
    </location>
</feature>
<feature type="compositionally biased region" description="Pro residues" evidence="4">
    <location>
        <begin position="591"/>
        <end position="600"/>
    </location>
</feature>
<feature type="compositionally biased region" description="Pro residues" evidence="4">
    <location>
        <begin position="638"/>
        <end position="649"/>
    </location>
</feature>
<feature type="compositionally biased region" description="Polar residues" evidence="4">
    <location>
        <begin position="654"/>
        <end position="672"/>
    </location>
</feature>
<feature type="compositionally biased region" description="Polar residues" evidence="4">
    <location>
        <begin position="754"/>
        <end position="773"/>
    </location>
</feature>
<feature type="compositionally biased region" description="Polar residues" evidence="4">
    <location>
        <begin position="783"/>
        <end position="798"/>
    </location>
</feature>
<feature type="compositionally biased region" description="Basic and acidic residues" evidence="4">
    <location>
        <begin position="800"/>
        <end position="811"/>
    </location>
</feature>
<feature type="modified residue" description="Phosphoserine" evidence="2">
    <location>
        <position position="696"/>
    </location>
</feature>
<feature type="splice variant" id="VSP_029934" description="In isoform 9." evidence="23">
    <location>
        <begin position="1"/>
        <end position="552"/>
    </location>
</feature>
<feature type="splice variant" id="VSP_029935" description="In isoform 8." evidence="23">
    <location>
        <begin position="1"/>
        <end position="503"/>
    </location>
</feature>
<feature type="splice variant" id="VSP_029936" description="In isoform 6 and isoform 7." evidence="23">
    <location>
        <begin position="1"/>
        <end position="442"/>
    </location>
</feature>
<feature type="splice variant" id="VSP_029937" description="In isoform 5." evidence="23">
    <location>
        <begin position="1"/>
        <end position="357"/>
    </location>
</feature>
<feature type="splice variant" id="VSP_045293" description="In isoform 12." evidence="25">
    <location>
        <begin position="323"/>
        <end position="918"/>
    </location>
</feature>
<feature type="splice variant" id="VSP_029938" description="In isoform 5." evidence="23">
    <original>KDVGRLPHARTTVDQTKWIASSRIGESVANSAGFPGDHTEEGTSK</original>
    <variation>MTTWCHRPRVRWSGSCVCGDHQHNARSHSLPRSLDSSGLCPSVFQ</variation>
    <location>
        <begin position="358"/>
        <end position="402"/>
    </location>
</feature>
<feature type="splice variant" id="VSP_029939" description="In isoform 2." evidence="23">
    <original>G</original>
    <variation>GSGLR</variation>
    <location>
        <position position="390"/>
    </location>
</feature>
<feature type="splice variant" id="VSP_029940" description="In isoform 10." evidence="24">
    <original>ERLLWLIDLMENTLDLEGTGETTQGSTN</original>
    <variation>VSHPCPILGEKVRARIRCFPPKPRVPHL</variation>
    <location>
        <begin position="544"/>
        <end position="571"/>
    </location>
</feature>
<feature type="splice variant" id="VSP_029941" description="In isoform 2, isoform 3, isoform 4, isoform 5, isoform 7 and isoform 8." evidence="22 23">
    <location>
        <begin position="544"/>
        <end position="554"/>
    </location>
</feature>
<feature type="splice variant" id="VSP_045294" description="In isoform 11." evidence="25">
    <original>NTLDLEGTGETT</original>
    <variation>VPSFCRGRLGVP</variation>
    <location>
        <begin position="555"/>
        <end position="566"/>
    </location>
</feature>
<feature type="splice variant" id="VSP_045295" description="In isoform 11." evidence="25">
    <location>
        <begin position="567"/>
        <end position="918"/>
    </location>
</feature>
<feature type="splice variant" id="VSP_029942" description="In isoform 10." evidence="24">
    <location>
        <begin position="572"/>
        <end position="918"/>
    </location>
</feature>
<feature type="splice variant" id="VSP_029943" description="In isoform 4." evidence="22 23">
    <location>
        <position position="758"/>
    </location>
</feature>
<feature type="sequence conflict" description="In Ref. 3; BAE34281." evidence="26" ref="3">
    <original>M</original>
    <variation>V</variation>
    <location>
        <position position="504"/>
    </location>
</feature>
<feature type="helix" evidence="30">
    <location>
        <begin position="425"/>
        <end position="434"/>
    </location>
</feature>
<feature type="helix" evidence="30">
    <location>
        <begin position="437"/>
        <end position="451"/>
    </location>
</feature>
<feature type="helix" evidence="30">
    <location>
        <begin position="457"/>
        <end position="467"/>
    </location>
</feature>
<feature type="helix" evidence="30">
    <location>
        <begin position="471"/>
        <end position="474"/>
    </location>
</feature>
<feature type="helix" evidence="30">
    <location>
        <begin position="476"/>
        <end position="481"/>
    </location>
</feature>
<feature type="helix" evidence="30">
    <location>
        <begin position="486"/>
        <end position="488"/>
    </location>
</feature>
<feature type="helix" evidence="30">
    <location>
        <begin position="489"/>
        <end position="495"/>
    </location>
</feature>
<feature type="strand" evidence="32">
    <location>
        <begin position="826"/>
        <end position="831"/>
    </location>
</feature>
<feature type="strand" evidence="31">
    <location>
        <begin position="834"/>
        <end position="836"/>
    </location>
</feature>
<feature type="strand" evidence="32">
    <location>
        <begin position="839"/>
        <end position="842"/>
    </location>
</feature>
<feature type="strand" evidence="32">
    <location>
        <begin position="847"/>
        <end position="849"/>
    </location>
</feature>
<feature type="strand" evidence="32">
    <location>
        <begin position="853"/>
        <end position="857"/>
    </location>
</feature>
<feature type="helix" evidence="32">
    <location>
        <begin position="862"/>
        <end position="865"/>
    </location>
</feature>
<feature type="strand" evidence="32">
    <location>
        <begin position="874"/>
        <end position="878"/>
    </location>
</feature>
<feature type="helix" evidence="32">
    <location>
        <begin position="888"/>
        <end position="900"/>
    </location>
</feature>
<feature type="strand" evidence="32">
    <location>
        <begin position="905"/>
        <end position="914"/>
    </location>
</feature>
<comment type="function">
    <text evidence="8 16 20">Involved in hearing and vision as member of the USH2 complex (PubMed:20502675). Necessary for elongation and maintenance of inner and outer hair cell stereocilia in the organ of Corti in the inner ear (PubMed:15590699). Involved in the maintenance of the hair bundle ankle region, which connects stereocilia in cochlear hair cells of the inner ear (PubMed:20502675, PubMed:24334608). In retina photoreceptors, required for the maintenance of periciliary membrane complex that seems to play a role in regulating intracellular protein transport (PubMed:20502675).</text>
</comment>
<comment type="subunit">
    <text evidence="1 2 7 9 10 12 15 16 17 18 19 21">Forms homooligomers (PubMed:15590698, PubMed:25406310). Interacts (via C-terminal PDZ domain) with MYO15A; this interaction is necessary for localization of WHRN to stereocilia tips (PubMed:15590698, PubMed:15654330). Interacts (via C-terminal PDZ domain) with MPP1/p55 (PubMed:16829577, PubMed:17584769). Interacts with LRRC4C/NGL1 (PubMed:15590698). Interacts with MYO7A (PubMed:15590698). Interacts with RPGR (PubMed:22323458). Interacts with EPS8 (PubMed:21236676). Interacts with CASK. Interacts with CIB2 (By similarity). Component of USH2 complex, composed of ADGRV1, PDZD7, USH2A and WHRN (PubMed:20502675, PubMed:25406310). Interacts (via PDZ domains) with PDZD7; the interaction is direct (PubMed:25406310). Interacts (via N-terminal PDZ domain) with USH2A (via cytoplasmic region) (PubMed:16301217, PubMed:20502675, PubMed:23055499). Interacts with ADGRV1/MASS1 (via cytoplasmic region) (PubMed:20502675, PubMed:23055499).</text>
</comment>
<comment type="interaction">
    <interactant intactId="EBI-7417603">
        <id>Q80VW5</id>
    </interactant>
    <interactant intactId="EBI-7417983">
        <id>Q8C031</id>
        <label>Lrrc4c</label>
    </interactant>
    <organismsDiffer>false</organismsDiffer>
    <experiments>4</experiments>
</comment>
<comment type="interaction">
    <interactant intactId="EBI-7417603">
        <id>Q80VW5</id>
    </interactant>
    <interactant intactId="EBI-8315951">
        <id>P70290</id>
        <label>Mpp1</label>
    </interactant>
    <organismsDiffer>false</organismsDiffer>
    <experiments>4</experiments>
</comment>
<comment type="interaction">
    <interactant intactId="EBI-7417603">
        <id>Q80VW5</id>
    </interactant>
    <interactant intactId="EBI-4281382">
        <id>Q9QZZ4</id>
        <label>Myo15a</label>
    </interactant>
    <organismsDiffer>false</organismsDiffer>
    <experiments>5</experiments>
</comment>
<comment type="interaction">
    <interactant intactId="EBI-6915655">
        <id>Q80VW5-12</id>
    </interactant>
    <interactant intactId="EBI-6915646">
        <id>Q9R0X5-5</id>
        <label>Rpgr</label>
    </interactant>
    <organismsDiffer>false</organismsDiffer>
    <experiments>2</experiments>
</comment>
<comment type="subcellular location">
    <subcellularLocation>
        <location>Cytoplasm</location>
    </subcellularLocation>
    <subcellularLocation>
        <location evidence="7 8 9 14 16 20">Cell projection</location>
        <location evidence="7 8 9 14 16 20">Stereocilium</location>
    </subcellularLocation>
    <subcellularLocation>
        <location evidence="15">Cell projection</location>
        <location evidence="15">Growth cone</location>
    </subcellularLocation>
    <subcellularLocation>
        <location evidence="16 20">Photoreceptor inner segment</location>
    </subcellularLocation>
    <subcellularLocation>
        <location evidence="1">Synapse</location>
    </subcellularLocation>
    <text evidence="7 8 9 15 16 20">Detected at the level of stereocilia in inner and outer hair cells of the cochlea and vestibule. Localizes to both tip and ankle-link stereocilia regions. Colocalizes with the growing ends of actin filaments (PubMed:15590698, PubMed:15590699, PubMed:15654330, PubMed:24334608). Colocalizes with MPP1 in the retina, at the outer limiting membrane (OLM), outer plexifirm layer (OPL), basal bodies and at the connecting cilium (CC) (PubMed:17584769). In photoreceptors, localizes at a plasma membrane microdomain in the apical inner segment that surrounds the connecting cilia called periciliary membrane complex (PubMed:20502675, PubMed:24334608).</text>
</comment>
<comment type="alternative products">
    <event type="alternative splicing"/>
    <isoform>
        <id>Q80VW5-1</id>
        <name>1</name>
        <sequence type="displayed"/>
    </isoform>
    <isoform>
        <id>Q80VW5-2</id>
        <name>2</name>
        <sequence type="described" ref="VSP_029939 VSP_029941"/>
    </isoform>
    <isoform>
        <id>Q80VW5-3</id>
        <name>3</name>
        <sequence type="described" ref="VSP_029941"/>
    </isoform>
    <isoform>
        <id>Q80VW5-4</id>
        <name>4</name>
        <sequence type="described" ref="VSP_029941 VSP_029943"/>
    </isoform>
    <isoform>
        <id>Q80VW5-5</id>
        <name>5</name>
        <sequence type="described" ref="VSP_029937 VSP_029938 VSP_029941"/>
    </isoform>
    <isoform>
        <id>Q80VW5-6</id>
        <name>6</name>
        <sequence type="described" ref="VSP_029936"/>
    </isoform>
    <isoform>
        <id>Q80VW5-7</id>
        <name>7</name>
        <sequence type="described" ref="VSP_029936 VSP_029941"/>
    </isoform>
    <isoform>
        <id>Q80VW5-8</id>
        <name>8</name>
        <sequence type="described" ref="VSP_029935 VSP_029941"/>
    </isoform>
    <isoform>
        <id>Q80VW5-9</id>
        <name>9</name>
        <sequence type="described" ref="VSP_029934"/>
    </isoform>
    <isoform>
        <id>Q80VW5-10</id>
        <name>10</name>
        <sequence type="described" ref="VSP_029940 VSP_029942"/>
    </isoform>
    <isoform>
        <id>Q80VW5-11</id>
        <name>11</name>
        <name>WhirlinNT2</name>
        <sequence type="described" ref="VSP_045294 VSP_045295"/>
    </isoform>
    <isoform>
        <id>Q80VW5-12</id>
        <name>12</name>
        <name>WhirlinNT1</name>
        <sequence type="described" ref="VSP_045293"/>
    </isoform>
</comment>
<comment type="tissue specificity">
    <text evidence="6 8 14 16 18">Expressed in the retina. Colocalizes with RPGR in the photoreceptor connecting cilium, a thin bridge linking the cell body and the light-sensing outer segment (at protein level). Detected in the inner ear throughout development from embryonic day 12 to 20 days after birth. Displays a dynamic pattern of expression after birth, demonstrating an ordered appearance and fade-out across stereocilia rows. Isoforms 5, 6, 7 and 8 are not detected in the retina (PubMed:20502675).</text>
</comment>
<comment type="developmental stage">
    <text evidence="8 11">At 10.5 dpc, expressed in the basal plate of the spinal cord, in the ventralneural epithelium of the developing brain and in the region of the lung bud. At 12.5 dpc, expressed in the complete neuroepithelium except for the neocortex. In the developing eye, expressed in the inner neuroblastic layer. At 14.5 dpc, detected in the intervertebral cartilage, the cortex of the developing kidney, the tongue, the region of the urethra and strongly in specific regions of the brain, e.g. striatum, optic recess, ventral tegmental area, roof of the midbrain, choroid plexus of the lateral ventricles and the fourth ventricle. The developing neocortex is devoid of expression. At this timepoint, expression is first notable in the inner ear in the developing maculae of the saccule and the utricle, in the cristae of the semicircular canals and in the vestibulocochlear ganglion. In the developing neural retina, a strong signal is present in the inner neuroblastic layer. At 16.5 dpc, expression is very similar to that at 14.5 dpc. At 18.5 dpc, expression is mainly as in 16.5 dpc. Expression in the ganglion layers of the retina decreases and is no longer detected in the innermost region of these layers. From postnatal day 7 (P7) onwards, also the developing photoreceptor cells express whirlin (PubMed:16434480). Expression decreases by 11 days after birth in inner ear hair cells and by 14 days after birth in outer ear hair cells. Expressed in vestibular hair cells at high levels through to adulthood.</text>
</comment>
<comment type="disease">
    <text evidence="5 6 13">Defects in Whrn are the cause of the phenotype whirler (wi). Mutants are characterized by deafness due to malformation of the cochlear inner and outer hair cells and by circling behavior. Stereocilia are shorter and wider than in wild-type animals and there is a decrease in the number of actin filaments in inner and outer hair cells. The number of outer hair cell stereocilia is reduced with increased spacing between them.</text>
</comment>
<comment type="disruption phenotype">
    <text evidence="16">Mutant mice for isoform 1 appear viable and comparable to their wild-type littermates in growth characteristics, reproductive performance and general health (PubMed:20502675). At 2 and 9 months of age, knockouts show a profound hearing loss across all cochlear frequencies (PubMed:20502675). At 28 to 33 months, they show signs for retinal degeneration such as a thinner photoreceptor nuclear layer and outer segments shortened (PubMed:20502675).</text>
</comment>
<comment type="miscellaneous">
    <molecule>Isoform 3</molecule>
    <text evidence="26">Major isoform.</text>
</comment>
<comment type="miscellaneous">
    <molecule>Isoform 11</molecule>
    <text evidence="26">May be due to intron retention.</text>
</comment>
<comment type="miscellaneous">
    <molecule>Isoform 12</molecule>
    <text evidence="26">May be due to intron retention.</text>
</comment>
<keyword id="KW-0002">3D-structure</keyword>
<keyword id="KW-0025">Alternative splicing</keyword>
<keyword id="KW-0966">Cell projection</keyword>
<keyword id="KW-0963">Cytoplasm</keyword>
<keyword id="KW-0209">Deafness</keyword>
<keyword id="KW-1009">Hearing</keyword>
<keyword id="KW-0597">Phosphoprotein</keyword>
<keyword id="KW-1185">Reference proteome</keyword>
<keyword id="KW-0677">Repeat</keyword>
<keyword id="KW-0770">Synapse</keyword>
<gene>
    <name evidence="27" type="primary">Whrn</name>
    <name type="synonym">Dfnb31</name>
    <name type="synonym">Kiaa1526</name>
</gene>
<evidence type="ECO:0000250" key="1">
    <source>
        <dbReference type="UniProtKB" id="Q810W9"/>
    </source>
</evidence>
<evidence type="ECO:0000250" key="2">
    <source>
        <dbReference type="UniProtKB" id="Q9P202"/>
    </source>
</evidence>
<evidence type="ECO:0000255" key="3">
    <source>
        <dbReference type="PROSITE-ProRule" id="PRU00143"/>
    </source>
</evidence>
<evidence type="ECO:0000256" key="4">
    <source>
        <dbReference type="SAM" id="MobiDB-lite"/>
    </source>
</evidence>
<evidence type="ECO:0000269" key="5">
    <source>
    </source>
</evidence>
<evidence type="ECO:0000269" key="6">
    <source>
    </source>
</evidence>
<evidence type="ECO:0000269" key="7">
    <source>
    </source>
</evidence>
<evidence type="ECO:0000269" key="8">
    <source>
    </source>
</evidence>
<evidence type="ECO:0000269" key="9">
    <source>
    </source>
</evidence>
<evidence type="ECO:0000269" key="10">
    <source>
    </source>
</evidence>
<evidence type="ECO:0000269" key="11">
    <source>
    </source>
</evidence>
<evidence type="ECO:0000269" key="12">
    <source>
    </source>
</evidence>
<evidence type="ECO:0000269" key="13">
    <source>
    </source>
</evidence>
<evidence type="ECO:0000269" key="14">
    <source>
    </source>
</evidence>
<evidence type="ECO:0000269" key="15">
    <source>
    </source>
</evidence>
<evidence type="ECO:0000269" key="16">
    <source>
    </source>
</evidence>
<evidence type="ECO:0000269" key="17">
    <source>
    </source>
</evidence>
<evidence type="ECO:0000269" key="18">
    <source>
    </source>
</evidence>
<evidence type="ECO:0000269" key="19">
    <source>
    </source>
</evidence>
<evidence type="ECO:0000269" key="20">
    <source>
    </source>
</evidence>
<evidence type="ECO:0000269" key="21">
    <source>
    </source>
</evidence>
<evidence type="ECO:0000303" key="22">
    <source>
    </source>
</evidence>
<evidence type="ECO:0000303" key="23">
    <source>
    </source>
</evidence>
<evidence type="ECO:0000303" key="24">
    <source>
    </source>
</evidence>
<evidence type="ECO:0000303" key="25">
    <source>
    </source>
</evidence>
<evidence type="ECO:0000305" key="26"/>
<evidence type="ECO:0000312" key="27">
    <source>
        <dbReference type="MGI" id="MGI:2682003"/>
    </source>
</evidence>
<evidence type="ECO:0007744" key="28">
    <source>
        <dbReference type="PDB" id="6FDD"/>
    </source>
</evidence>
<evidence type="ECO:0007744" key="29">
    <source>
        <dbReference type="PDB" id="6FDE"/>
    </source>
</evidence>
<evidence type="ECO:0007829" key="30">
    <source>
        <dbReference type="PDB" id="6FDD"/>
    </source>
</evidence>
<evidence type="ECO:0007829" key="31">
    <source>
        <dbReference type="PDB" id="6Y38"/>
    </source>
</evidence>
<evidence type="ECO:0007829" key="32">
    <source>
        <dbReference type="PDB" id="6Y9Q"/>
    </source>
</evidence>
<accession>Q80VW5</accession>
<accession>A2AGD2</accession>
<accession>I6MML6</accession>
<accession>I6MML7</accession>
<accession>Q3TZC8</accession>
<accession>Q5MLF1</accession>
<accession>Q5MLF2</accession>
<accession>Q5MLF3</accession>
<accession>Q5MLF4</accession>
<accession>Q5MLF5</accession>
<accession>Q5MLF6</accession>
<accession>Q5MLF7</accession>
<accession>Q5MLF8</accession>
<accession>Q5MLF9</accession>
<accession>Q80TC2</accession>
<accession>Q80VW4</accession>
<organism>
    <name type="scientific">Mus musculus</name>
    <name type="common">Mouse</name>
    <dbReference type="NCBI Taxonomy" id="10090"/>
    <lineage>
        <taxon>Eukaryota</taxon>
        <taxon>Metazoa</taxon>
        <taxon>Chordata</taxon>
        <taxon>Craniata</taxon>
        <taxon>Vertebrata</taxon>
        <taxon>Euteleostomi</taxon>
        <taxon>Mammalia</taxon>
        <taxon>Eutheria</taxon>
        <taxon>Euarchontoglires</taxon>
        <taxon>Glires</taxon>
        <taxon>Rodentia</taxon>
        <taxon>Myomorpha</taxon>
        <taxon>Muroidea</taxon>
        <taxon>Muridae</taxon>
        <taxon>Murinae</taxon>
        <taxon>Mus</taxon>
        <taxon>Mus</taxon>
    </lineage>
</organism>
<name>WHRN_MOUSE</name>